<dbReference type="EMBL" id="AY261360">
    <property type="status" value="NOT_ANNOTATED_CDS"/>
    <property type="molecule type" value="Genomic_DNA"/>
</dbReference>
<dbReference type="SMR" id="P0CA26"/>
<dbReference type="Proteomes" id="UP000000861">
    <property type="component" value="Segment"/>
</dbReference>
<dbReference type="GO" id="GO:0033644">
    <property type="term" value="C:host cell membrane"/>
    <property type="evidence" value="ECO:0007669"/>
    <property type="project" value="UniProtKB-SubCell"/>
</dbReference>
<dbReference type="GO" id="GO:0016020">
    <property type="term" value="C:membrane"/>
    <property type="evidence" value="ECO:0007669"/>
    <property type="project" value="UniProtKB-KW"/>
</dbReference>
<dbReference type="GO" id="GO:0044423">
    <property type="term" value="C:virion component"/>
    <property type="evidence" value="ECO:0007669"/>
    <property type="project" value="UniProtKB-KW"/>
</dbReference>
<organismHost>
    <name type="scientific">Ornithodoros</name>
    <name type="common">relapsing fever ticks</name>
    <dbReference type="NCBI Taxonomy" id="6937"/>
</organismHost>
<organismHost>
    <name type="scientific">Phacochoerus aethiopicus</name>
    <name type="common">Warthog</name>
    <dbReference type="NCBI Taxonomy" id="85517"/>
</organismHost>
<organismHost>
    <name type="scientific">Phacochoerus africanus</name>
    <name type="common">Warthog</name>
    <dbReference type="NCBI Taxonomy" id="41426"/>
</organismHost>
<organismHost>
    <name type="scientific">Potamochoerus larvatus</name>
    <name type="common">Bushpig</name>
    <dbReference type="NCBI Taxonomy" id="273792"/>
</organismHost>
<organismHost>
    <name type="scientific">Sus scrofa</name>
    <name type="common">Pig</name>
    <dbReference type="NCBI Taxonomy" id="9823"/>
</organismHost>
<reference key="1">
    <citation type="submission" date="2003-03" db="EMBL/GenBank/DDBJ databases">
        <title>African swine fever virus genomes.</title>
        <authorList>
            <person name="Kutish G.F."/>
            <person name="Rock D.L."/>
        </authorList>
    </citation>
    <scope>NUCLEOTIDE SEQUENCE [LARGE SCALE GENOMIC DNA]</scope>
</reference>
<organism>
    <name type="scientific">African swine fever virus (isolate Pig/Kenya/KEN-50/1950)</name>
    <name type="common">ASFV</name>
    <dbReference type="NCBI Taxonomy" id="561445"/>
    <lineage>
        <taxon>Viruses</taxon>
        <taxon>Varidnaviria</taxon>
        <taxon>Bamfordvirae</taxon>
        <taxon>Nucleocytoviricota</taxon>
        <taxon>Pokkesviricetes</taxon>
        <taxon>Asfuvirales</taxon>
        <taxon>Asfarviridae</taxon>
        <taxon>Asfivirus</taxon>
        <taxon>African swine fever virus</taxon>
    </lineage>
</organism>
<protein>
    <recommendedName>
        <fullName>Uncharacterized protein CP123L</fullName>
        <shortName>pCP123L</shortName>
    </recommendedName>
</protein>
<comment type="subcellular location">
    <subcellularLocation>
        <location evidence="3">Host membrane</location>
        <topology evidence="3">Single-pass membrane protein</topology>
    </subcellularLocation>
    <subcellularLocation>
        <location evidence="1">Virion</location>
    </subcellularLocation>
</comment>
<comment type="induction">
    <text evidence="3">Expressed in the late phase of the viral replicative cycle.</text>
</comment>
<comment type="similarity">
    <text evidence="3">Belongs to the asfivirus CP123L family.</text>
</comment>
<name>VF123_ASFK5</name>
<proteinExistence type="inferred from homology"/>
<keyword id="KW-1043">Host membrane</keyword>
<keyword id="KW-0426">Late protein</keyword>
<keyword id="KW-0472">Membrane</keyword>
<keyword id="KW-0812">Transmembrane</keyword>
<keyword id="KW-1133">Transmembrane helix</keyword>
<keyword id="KW-0946">Virion</keyword>
<evidence type="ECO:0000250" key="1">
    <source>
        <dbReference type="UniProtKB" id="Q65178"/>
    </source>
</evidence>
<evidence type="ECO:0000255" key="2"/>
<evidence type="ECO:0000305" key="3"/>
<accession>P0CA26</accession>
<gene>
    <name type="ordered locus">Ken-103</name>
</gene>
<sequence length="123" mass="14046">MPSTGTLVILFAIILILCIMLLFYYKTTEAGNPGVLPPPIPPPTPPPPKKKYDHNEYMEKTDLEPEVKKNHRKWANEAEHLISSSVKGLENLDETAFLANHKGHGFRTFEHAKSLFKEFLKKY</sequence>
<feature type="chain" id="PRO_0000373491" description="Uncharacterized protein CP123L">
    <location>
        <begin position="1"/>
        <end position="123"/>
    </location>
</feature>
<feature type="transmembrane region" description="Helical" evidence="2">
    <location>
        <begin position="5"/>
        <end position="25"/>
    </location>
</feature>